<gene>
    <name type="primary">ccrM</name>
    <name type="synonym">babI</name>
    <name type="ordered locus">BR0491</name>
    <name type="ordered locus">BS1330_I0492</name>
</gene>
<feature type="chain" id="PRO_0000363189" description="DNA methyltransferase CcrM">
    <location>
        <begin position="1"/>
        <end position="377"/>
    </location>
</feature>
<feature type="domain" description="RAMA" evidence="3">
    <location>
        <begin position="271"/>
        <end position="373"/>
    </location>
</feature>
<comment type="function">
    <text evidence="1 2 4">A beta subtype methylase that recognizes the double-stranded sequence 5'-GANTC-3' and methylates A-2 on both strands (By similarity) (PubMed:12654995). CcrM-mediated methylation has important cellular functions. Contributes to the accurate cell-cycle control of DNA replication and cellular morphology (By similarity).</text>
</comment>
<comment type="catalytic activity">
    <reaction>
        <text>a 2'-deoxyadenosine in DNA + S-adenosyl-L-methionine = an N(6)-methyl-2'-deoxyadenosine in DNA + S-adenosyl-L-homocysteine + H(+)</text>
        <dbReference type="Rhea" id="RHEA:15197"/>
        <dbReference type="Rhea" id="RHEA-COMP:12418"/>
        <dbReference type="Rhea" id="RHEA-COMP:12419"/>
        <dbReference type="ChEBI" id="CHEBI:15378"/>
        <dbReference type="ChEBI" id="CHEBI:57856"/>
        <dbReference type="ChEBI" id="CHEBI:59789"/>
        <dbReference type="ChEBI" id="CHEBI:90615"/>
        <dbReference type="ChEBI" id="CHEBI:90616"/>
        <dbReference type="EC" id="2.1.1.72"/>
    </reaction>
</comment>
<comment type="similarity">
    <text evidence="5">Belongs to the N(4)/N(6)-methyltransferase family.</text>
</comment>
<proteinExistence type="inferred from homology"/>
<sequence>MSLVRLAHELPIEAPRTAWLDSIIKGDCVSALERLPDHSVDVIFADPPYNLQLGGDLHRPDQSMVSAVDDHWDQFESFQAYDAFTRAWLLACRRVLKPNGTIWVIGSYHNIFRVGTQLQDLGFWLLNDIVWRKTNPMPNFRGRRFQNAHETLIWASRDQKGKGYTFNYEAMKAANDDVQMRSDWLFPICTGSERLKDENGDKVHPTQKPEALLARIMMASSKPGDVILDPFFGSGTTGAVAKRLGRHFVGIEREQPYIDAATARINAVEPLGKAELTVMTGKRAEPRVAFTSVMEAGLLRPGTVLCDERRRFAAIVRADGTLTANGEAGSIHRIGARVQGFDACNGWTFWHFEENGVLKPIDALRKIIREQMAAAGA</sequence>
<dbReference type="EC" id="2.1.1.72"/>
<dbReference type="EMBL" id="AE014291">
    <property type="protein sequence ID" value="AAN29434.1"/>
    <property type="molecule type" value="Genomic_DNA"/>
</dbReference>
<dbReference type="EMBL" id="CP002997">
    <property type="protein sequence ID" value="AEM17847.1"/>
    <property type="molecule type" value="Genomic_DNA"/>
</dbReference>
<dbReference type="RefSeq" id="WP_004689516.1">
    <property type="nucleotide sequence ID" value="NZ_KN046804.1"/>
</dbReference>
<dbReference type="SMR" id="Q8G242"/>
<dbReference type="REBASE" id="39483">
    <property type="entry name" value="M.Bsu1330ORF492P"/>
</dbReference>
<dbReference type="REBASE" id="40994">
    <property type="entry name" value="M.Bsu1330ORF491P"/>
</dbReference>
<dbReference type="KEGG" id="bms:BR0491"/>
<dbReference type="KEGG" id="bsi:BS1330_I0492"/>
<dbReference type="PATRIC" id="fig|204722.22.peg.1353"/>
<dbReference type="HOGENOM" id="CLU_024927_5_1_5"/>
<dbReference type="Proteomes" id="UP000007104">
    <property type="component" value="Chromosome I"/>
</dbReference>
<dbReference type="GO" id="GO:0005737">
    <property type="term" value="C:cytoplasm"/>
    <property type="evidence" value="ECO:0007669"/>
    <property type="project" value="TreeGrafter"/>
</dbReference>
<dbReference type="GO" id="GO:0003677">
    <property type="term" value="F:DNA binding"/>
    <property type="evidence" value="ECO:0007669"/>
    <property type="project" value="UniProtKB-KW"/>
</dbReference>
<dbReference type="GO" id="GO:0008170">
    <property type="term" value="F:N-methyltransferase activity"/>
    <property type="evidence" value="ECO:0007669"/>
    <property type="project" value="InterPro"/>
</dbReference>
<dbReference type="GO" id="GO:0009007">
    <property type="term" value="F:site-specific DNA-methyltransferase (adenine-specific) activity"/>
    <property type="evidence" value="ECO:0007669"/>
    <property type="project" value="UniProtKB-EC"/>
</dbReference>
<dbReference type="GO" id="GO:0006260">
    <property type="term" value="P:DNA replication"/>
    <property type="evidence" value="ECO:0007669"/>
    <property type="project" value="UniProtKB-KW"/>
</dbReference>
<dbReference type="GO" id="GO:0032259">
    <property type="term" value="P:methylation"/>
    <property type="evidence" value="ECO:0007669"/>
    <property type="project" value="UniProtKB-KW"/>
</dbReference>
<dbReference type="FunFam" id="3.40.50.150:FF:000276">
    <property type="entry name" value="Methyltransferase"/>
    <property type="match status" value="1"/>
</dbReference>
<dbReference type="Gene3D" id="3.40.50.150">
    <property type="entry name" value="Vaccinia Virus protein VP39"/>
    <property type="match status" value="1"/>
</dbReference>
<dbReference type="InterPro" id="IPR002941">
    <property type="entry name" value="DNA_methylase_N4/N6"/>
</dbReference>
<dbReference type="InterPro" id="IPR002052">
    <property type="entry name" value="DNA_methylase_N6_adenine_CS"/>
</dbReference>
<dbReference type="InterPro" id="IPR040843">
    <property type="entry name" value="RAMA"/>
</dbReference>
<dbReference type="InterPro" id="IPR001091">
    <property type="entry name" value="RM_Methyltransferase"/>
</dbReference>
<dbReference type="InterPro" id="IPR029063">
    <property type="entry name" value="SAM-dependent_MTases_sf"/>
</dbReference>
<dbReference type="PANTHER" id="PTHR13370">
    <property type="entry name" value="RNA METHYLASE-RELATED"/>
    <property type="match status" value="1"/>
</dbReference>
<dbReference type="PANTHER" id="PTHR13370:SF3">
    <property type="entry name" value="TRNA (GUANINE(10)-N2)-METHYLTRANSFERASE HOMOLOG"/>
    <property type="match status" value="1"/>
</dbReference>
<dbReference type="Pfam" id="PF01555">
    <property type="entry name" value="N6_N4_Mtase"/>
    <property type="match status" value="1"/>
</dbReference>
<dbReference type="Pfam" id="PF18755">
    <property type="entry name" value="RAMA"/>
    <property type="match status" value="1"/>
</dbReference>
<dbReference type="PRINTS" id="PR00508">
    <property type="entry name" value="S21N4MTFRASE"/>
</dbReference>
<dbReference type="SUPFAM" id="SSF53335">
    <property type="entry name" value="S-adenosyl-L-methionine-dependent methyltransferases"/>
    <property type="match status" value="1"/>
</dbReference>
<dbReference type="PROSITE" id="PS00092">
    <property type="entry name" value="N6_MTASE"/>
    <property type="match status" value="1"/>
</dbReference>
<reference key="1">
    <citation type="journal article" date="2002" name="Proc. Natl. Acad. Sci. U.S.A.">
        <title>The Brucella suis genome reveals fundamental similarities between animal and plant pathogens and symbionts.</title>
        <authorList>
            <person name="Paulsen I.T."/>
            <person name="Seshadri R."/>
            <person name="Nelson K.E."/>
            <person name="Eisen J.A."/>
            <person name="Heidelberg J.F."/>
            <person name="Read T.D."/>
            <person name="Dodson R.J."/>
            <person name="Umayam L.A."/>
            <person name="Brinkac L.M."/>
            <person name="Beanan M.J."/>
            <person name="Daugherty S.C."/>
            <person name="DeBoy R.T."/>
            <person name="Durkin A.S."/>
            <person name="Kolonay J.F."/>
            <person name="Madupu R."/>
            <person name="Nelson W.C."/>
            <person name="Ayodeji B."/>
            <person name="Kraul M."/>
            <person name="Shetty J."/>
            <person name="Malek J.A."/>
            <person name="Van Aken S.E."/>
            <person name="Riedmuller S."/>
            <person name="Tettelin H."/>
            <person name="Gill S.R."/>
            <person name="White O."/>
            <person name="Salzberg S.L."/>
            <person name="Hoover D.L."/>
            <person name="Lindler L.E."/>
            <person name="Halling S.M."/>
            <person name="Boyle S.M."/>
            <person name="Fraser C.M."/>
        </authorList>
    </citation>
    <scope>NUCLEOTIDE SEQUENCE [LARGE SCALE GENOMIC DNA]</scope>
    <source>
        <strain>1330</strain>
    </source>
</reference>
<reference key="2">
    <citation type="journal article" date="2011" name="J. Bacteriol.">
        <title>Revised genome sequence of Brucella suis 1330.</title>
        <authorList>
            <person name="Tae H."/>
            <person name="Shallom S."/>
            <person name="Settlage R."/>
            <person name="Preston D."/>
            <person name="Adams L.G."/>
            <person name="Garner H.R."/>
        </authorList>
    </citation>
    <scope>NUCLEOTIDE SEQUENCE [LARGE SCALE GENOMIC DNA]</scope>
    <source>
        <strain>1330</strain>
    </source>
</reference>
<reference key="3">
    <citation type="journal article" date="2003" name="Nucleic Acids Res.">
        <title>A nomenclature for restriction enzymes, DNA methyltransferases, homing endonucleases and their genes.</title>
        <authorList>
            <person name="Roberts R.J."/>
            <person name="Belfort M."/>
            <person name="Bestor T."/>
            <person name="Bhagwat A.S."/>
            <person name="Bickle T.A."/>
            <person name="Bitinaite J."/>
            <person name="Blumenthal R.M."/>
            <person name="Degtyarev S.K."/>
            <person name="Dryden D.T."/>
            <person name="Dybvig K."/>
            <person name="Firman K."/>
            <person name="Gromova E.S."/>
            <person name="Gumport R.I."/>
            <person name="Halford S.E."/>
            <person name="Hattman S."/>
            <person name="Heitman J."/>
            <person name="Hornby D.P."/>
            <person name="Janulaitis A."/>
            <person name="Jeltsch A."/>
            <person name="Josephsen J."/>
            <person name="Kiss A."/>
            <person name="Klaenhammer T.R."/>
            <person name="Kobayashi I."/>
            <person name="Kong H."/>
            <person name="Krueger D.H."/>
            <person name="Lacks S."/>
            <person name="Marinus M.G."/>
            <person name="Miyahara M."/>
            <person name="Morgan R.D."/>
            <person name="Murray N.E."/>
            <person name="Nagaraja V."/>
            <person name="Piekarowicz A."/>
            <person name="Pingoud A."/>
            <person name="Raleigh E."/>
            <person name="Rao D.N."/>
            <person name="Reich N."/>
            <person name="Repin V.E."/>
            <person name="Selker E.U."/>
            <person name="Shaw P.C."/>
            <person name="Stein D.C."/>
            <person name="Stoddard B.L."/>
            <person name="Szybalski W."/>
            <person name="Trautner T.A."/>
            <person name="Van Etten J.L."/>
            <person name="Vitor J.M."/>
            <person name="Wilson G.G."/>
            <person name="Xu S.Y."/>
        </authorList>
    </citation>
    <scope>NOMENCLATURE</scope>
    <scope>SUBTYPE</scope>
</reference>
<keyword id="KW-0235">DNA replication</keyword>
<keyword id="KW-0238">DNA-binding</keyword>
<keyword id="KW-0489">Methyltransferase</keyword>
<keyword id="KW-0949">S-adenosyl-L-methionine</keyword>
<keyword id="KW-0808">Transferase</keyword>
<name>CCRM_BRUSU</name>
<organism>
    <name type="scientific">Brucella suis biovar 1 (strain 1330)</name>
    <dbReference type="NCBI Taxonomy" id="204722"/>
    <lineage>
        <taxon>Bacteria</taxon>
        <taxon>Pseudomonadati</taxon>
        <taxon>Pseudomonadota</taxon>
        <taxon>Alphaproteobacteria</taxon>
        <taxon>Hyphomicrobiales</taxon>
        <taxon>Brucellaceae</taxon>
        <taxon>Brucella/Ochrobactrum group</taxon>
        <taxon>Brucella</taxon>
    </lineage>
</organism>
<evidence type="ECO:0000250" key="1">
    <source>
        <dbReference type="UniProtKB" id="O30569"/>
    </source>
</evidence>
<evidence type="ECO:0000250" key="2">
    <source>
        <dbReference type="UniProtKB" id="Q2YMK2"/>
    </source>
</evidence>
<evidence type="ECO:0000255" key="3"/>
<evidence type="ECO:0000303" key="4">
    <source>
    </source>
</evidence>
<evidence type="ECO:0000305" key="5"/>
<protein>
    <recommendedName>
        <fullName evidence="2">DNA methyltransferase CcrM</fullName>
        <shortName>M.CcrM</shortName>
        <ecNumber>2.1.1.72</ecNumber>
    </recommendedName>
    <alternativeName>
        <fullName>Adenine-specific methyltransferase BabI</fullName>
    </alternativeName>
    <alternativeName>
        <fullName evidence="4">Probable type II methyltransferase M.Bsu1330ORF492P/M.Bsu1330ORF491P</fullName>
        <shortName evidence="4">M.Bsu1330ORF492P/M.Bsu1330ORF491P</shortName>
    </alternativeName>
</protein>
<accession>Q8G242</accession>
<accession>G0K740</accession>